<protein>
    <recommendedName>
        <fullName evidence="4">Lyso-ornithine lipid O-acyltransferase</fullName>
        <ecNumber evidence="2">2.3.1.270</ecNumber>
    </recommendedName>
</protein>
<dbReference type="EC" id="2.3.1.270" evidence="2"/>
<dbReference type="EMBL" id="AM040264">
    <property type="protein sequence ID" value="CAJ12109.1"/>
    <property type="molecule type" value="Genomic_DNA"/>
</dbReference>
<dbReference type="RefSeq" id="WP_002967046.1">
    <property type="nucleotide sequence ID" value="NZ_KN046823.1"/>
</dbReference>
<dbReference type="SMR" id="Q2YQS9"/>
<dbReference type="STRING" id="359391.BAB1_2153"/>
<dbReference type="KEGG" id="bmf:BAB1_2153"/>
<dbReference type="PATRIC" id="fig|359391.11.peg.1388"/>
<dbReference type="HOGENOM" id="CLU_027938_0_2_5"/>
<dbReference type="PhylomeDB" id="Q2YQS9"/>
<dbReference type="Proteomes" id="UP000002719">
    <property type="component" value="Chromosome I"/>
</dbReference>
<dbReference type="GO" id="GO:0016020">
    <property type="term" value="C:membrane"/>
    <property type="evidence" value="ECO:0007669"/>
    <property type="project" value="UniProtKB-SubCell"/>
</dbReference>
<dbReference type="GO" id="GO:0016746">
    <property type="term" value="F:acyltransferase activity"/>
    <property type="evidence" value="ECO:0007669"/>
    <property type="project" value="UniProtKB-KW"/>
</dbReference>
<dbReference type="GO" id="GO:0006629">
    <property type="term" value="P:lipid metabolic process"/>
    <property type="evidence" value="ECO:0007669"/>
    <property type="project" value="UniProtKB-KW"/>
</dbReference>
<dbReference type="CDD" id="cd07989">
    <property type="entry name" value="LPLAT_AGPAT-like"/>
    <property type="match status" value="1"/>
</dbReference>
<dbReference type="InterPro" id="IPR002123">
    <property type="entry name" value="Plipid/glycerol_acylTrfase"/>
</dbReference>
<dbReference type="PANTHER" id="PTHR23063:SF52">
    <property type="entry name" value="LYSOPHOSPHATIDYLCHOLINE ACYLTRANSFERASE"/>
    <property type="match status" value="1"/>
</dbReference>
<dbReference type="PANTHER" id="PTHR23063">
    <property type="entry name" value="PHOSPHOLIPID ACYLTRANSFERASE"/>
    <property type="match status" value="1"/>
</dbReference>
<dbReference type="Pfam" id="PF01553">
    <property type="entry name" value="Acyltransferase"/>
    <property type="match status" value="1"/>
</dbReference>
<dbReference type="SMART" id="SM00563">
    <property type="entry name" value="PlsC"/>
    <property type="match status" value="1"/>
</dbReference>
<dbReference type="SUPFAM" id="SSF69593">
    <property type="entry name" value="Glycerol-3-phosphate (1)-acyltransferase"/>
    <property type="match status" value="1"/>
</dbReference>
<proteinExistence type="evidence at protein level"/>
<evidence type="ECO:0000255" key="1"/>
<evidence type="ECO:0000269" key="2">
    <source>
    </source>
</evidence>
<evidence type="ECO:0000303" key="3">
    <source>
    </source>
</evidence>
<evidence type="ECO:0000305" key="4"/>
<evidence type="ECO:0000312" key="5">
    <source>
        <dbReference type="EMBL" id="CAJ12109.1"/>
    </source>
</evidence>
<gene>
    <name evidence="3" type="primary">olsA</name>
    <name evidence="5" type="ordered locus">BAB1_2153</name>
</gene>
<reference key="1">
    <citation type="journal article" date="2005" name="Infect. Immun.">
        <title>Whole-genome analyses of speciation events in pathogenic Brucellae.</title>
        <authorList>
            <person name="Chain P.S."/>
            <person name="Comerci D.J."/>
            <person name="Tolmasky M.E."/>
            <person name="Larimer F.W."/>
            <person name="Malfatti S.A."/>
            <person name="Vergez L.M."/>
            <person name="Aguero F."/>
            <person name="Land M.L."/>
            <person name="Ugalde R.A."/>
            <person name="Garcia E."/>
        </authorList>
    </citation>
    <scope>NUCLEOTIDE SEQUENCE [LARGE SCALE GENOMIC DNA]</scope>
    <source>
        <strain>2308</strain>
    </source>
</reference>
<reference key="2">
    <citation type="journal article" date="2011" name="PLoS ONE">
        <title>Brucella abortus ornithine lipids are dispensable outer membrane components devoid of a marked pathogen-associated molecular pattern.</title>
        <authorList>
            <person name="Palacios-Chaves L."/>
            <person name="Conde-Alvarez R."/>
            <person name="Gil-Ramirez Y."/>
            <person name="Zuniga-Ripa A."/>
            <person name="Barquero-Calvo E."/>
            <person name="Chacon-Diaz C."/>
            <person name="Chaves-Olarte E."/>
            <person name="Arce-Gorvel V."/>
            <person name="Gorvel J.P."/>
            <person name="Moreno E."/>
            <person name="de Miguel M.J."/>
            <person name="Grillo M.J."/>
            <person name="Moriyon I."/>
            <person name="Iriarte M."/>
        </authorList>
    </citation>
    <scope>FUNCTION</scope>
    <scope>CATALYTIC ACTIVITY</scope>
    <scope>PATHWAY</scope>
    <scope>DISRUPTION PHENOTYPE</scope>
    <source>
        <strain>2308</strain>
    </source>
</reference>
<comment type="function">
    <text evidence="2">Catalyzes the second step in the formation of ornithine lipids, which are phosphorus-free membrane lipids. Uses acyl-acyl carrier protein (acyl-AcpP) as an acyl donor and converts lyso-ornithine lipid (LOL) into ornithine lipid (OL).</text>
</comment>
<comment type="catalytic activity">
    <reaction evidence="2">
        <text>a lyso-ornithine lipid + a fatty acyl-[ACP] = an N(2)-[(3R)-3-(acyloxy)acyl]-L-ornithine lipid + holo-[ACP]</text>
        <dbReference type="Rhea" id="RHEA:55760"/>
        <dbReference type="Rhea" id="RHEA-COMP:9685"/>
        <dbReference type="Rhea" id="RHEA-COMP:14125"/>
        <dbReference type="ChEBI" id="CHEBI:64479"/>
        <dbReference type="ChEBI" id="CHEBI:138482"/>
        <dbReference type="ChEBI" id="CHEBI:138651"/>
        <dbReference type="ChEBI" id="CHEBI:140663"/>
        <dbReference type="EC" id="2.3.1.270"/>
    </reaction>
    <physiologicalReaction direction="left-to-right" evidence="2">
        <dbReference type="Rhea" id="RHEA:55761"/>
    </physiologicalReaction>
</comment>
<comment type="pathway">
    <text evidence="2">Lipid metabolism.</text>
</comment>
<comment type="subcellular location">
    <subcellularLocation>
        <location evidence="1">Membrane</location>
        <topology evidence="1">Single-pass membrane protein</topology>
    </subcellularLocation>
</comment>
<comment type="disruption phenotype">
    <text evidence="2">Deletion mutant lacks ornithine lipids but synthesizes a component corresponding to the lyso-ornithine lipid precursor. It does not affect resistance to bactericidal peptides or permeability of the outer membrane.</text>
</comment>
<comment type="similarity">
    <text evidence="4">Belongs to the 1-acyl-sn-glycerol-3-phosphate acyltransferase family. OlsA subfamily.</text>
</comment>
<feature type="chain" id="PRO_0000452115" description="Lyso-ornithine lipid O-acyltransferase">
    <location>
        <begin position="1"/>
        <end position="267"/>
    </location>
</feature>
<feature type="transmembrane region" description="Helical" evidence="1">
    <location>
        <begin position="7"/>
        <end position="27"/>
    </location>
</feature>
<sequence length="267" mass="29662">MIGTIRIFLVVAAMVALSLSLIPFQYLFLKLKNGWKRRLPNFFHRIVARLFGFRIRTVGKLHEGCPLLLVSNHTSWSDIVVLSAVGQVSFIAKSEVRDWPVFGMFAVLQRTVFVERARRGKTVHQTSEIANRLIAGDAMVLFAEGTTSDGNRVLPFKTALFGAAHAAIREAGVAEVAVQPVAIAYTRVHGMAMGRYFRPLVSWPGDVELMPHLKGILREGAIDVEVRFGEPVFVTAETDRKALARTMENRVRALLQSALLGREIPEA</sequence>
<name>OLSA_BRUA2</name>
<accession>Q2YQS9</accession>
<keyword id="KW-0012">Acyltransferase</keyword>
<keyword id="KW-0444">Lipid biosynthesis</keyword>
<keyword id="KW-0443">Lipid metabolism</keyword>
<keyword id="KW-0472">Membrane</keyword>
<keyword id="KW-1185">Reference proteome</keyword>
<keyword id="KW-0808">Transferase</keyword>
<keyword id="KW-0812">Transmembrane</keyword>
<keyword id="KW-1133">Transmembrane helix</keyword>
<organism>
    <name type="scientific">Brucella abortus (strain 2308)</name>
    <dbReference type="NCBI Taxonomy" id="359391"/>
    <lineage>
        <taxon>Bacteria</taxon>
        <taxon>Pseudomonadati</taxon>
        <taxon>Pseudomonadota</taxon>
        <taxon>Alphaproteobacteria</taxon>
        <taxon>Hyphomicrobiales</taxon>
        <taxon>Brucellaceae</taxon>
        <taxon>Brucella/Ochrobactrum group</taxon>
        <taxon>Brucella</taxon>
    </lineage>
</organism>